<comment type="caution">
    <text evidence="2">Product of a dubious gene prediction.</text>
</comment>
<gene>
    <name type="ORF">DDB_G0293968</name>
</gene>
<evidence type="ECO:0000256" key="1">
    <source>
        <dbReference type="SAM" id="MobiDB-lite"/>
    </source>
</evidence>
<evidence type="ECO:0000305" key="2"/>
<dbReference type="EMBL" id="AAFI02000224">
    <property type="protein sequence ID" value="EAL60483.1"/>
    <property type="molecule type" value="Genomic_DNA"/>
</dbReference>
<dbReference type="RefSeq" id="XP_628893.1">
    <property type="nucleotide sequence ID" value="XM_628891.1"/>
</dbReference>
<dbReference type="EnsemblProtists" id="EAL60483">
    <property type="protein sequence ID" value="EAL60483"/>
    <property type="gene ID" value="DDB_G0293968"/>
</dbReference>
<dbReference type="GeneID" id="8629509"/>
<dbReference type="KEGG" id="ddi:DDB_G0293968"/>
<dbReference type="HOGENOM" id="CLU_215545_1_0_1"/>
<dbReference type="InParanoid" id="Q54B23"/>
<dbReference type="Proteomes" id="UP000002195">
    <property type="component" value="Chromosome 6"/>
</dbReference>
<organism>
    <name type="scientific">Dictyostelium discoideum</name>
    <name type="common">Social amoeba</name>
    <dbReference type="NCBI Taxonomy" id="44689"/>
    <lineage>
        <taxon>Eukaryota</taxon>
        <taxon>Amoebozoa</taxon>
        <taxon>Evosea</taxon>
        <taxon>Eumycetozoa</taxon>
        <taxon>Dictyostelia</taxon>
        <taxon>Dictyosteliales</taxon>
        <taxon>Dictyosteliaceae</taxon>
        <taxon>Dictyostelium</taxon>
    </lineage>
</organism>
<feature type="chain" id="PRO_0000343929" description="Putative uncharacterized protein DDB_G0293968">
    <location>
        <begin position="1"/>
        <end position="43"/>
    </location>
</feature>
<feature type="region of interest" description="Disordered" evidence="1">
    <location>
        <begin position="1"/>
        <end position="43"/>
    </location>
</feature>
<feature type="compositionally biased region" description="Low complexity" evidence="1">
    <location>
        <begin position="1"/>
        <end position="37"/>
    </location>
</feature>
<proteinExistence type="uncertain"/>
<accession>Q54B23</accession>
<protein>
    <recommendedName>
        <fullName>Putative uncharacterized protein DDB_G0293968</fullName>
    </recommendedName>
</protein>
<name>Y9792_DICDI</name>
<keyword id="KW-1185">Reference proteome</keyword>
<sequence length="43" mass="4979">MIIKNNNNNNNNNNNNNNNNNNNNNNNNNNNNNNNNNIEIIIK</sequence>
<reference key="1">
    <citation type="journal article" date="2005" name="Nature">
        <title>The genome of the social amoeba Dictyostelium discoideum.</title>
        <authorList>
            <person name="Eichinger L."/>
            <person name="Pachebat J.A."/>
            <person name="Gloeckner G."/>
            <person name="Rajandream M.A."/>
            <person name="Sucgang R."/>
            <person name="Berriman M."/>
            <person name="Song J."/>
            <person name="Olsen R."/>
            <person name="Szafranski K."/>
            <person name="Xu Q."/>
            <person name="Tunggal B."/>
            <person name="Kummerfeld S."/>
            <person name="Madera M."/>
            <person name="Konfortov B.A."/>
            <person name="Rivero F."/>
            <person name="Bankier A.T."/>
            <person name="Lehmann R."/>
            <person name="Hamlin N."/>
            <person name="Davies R."/>
            <person name="Gaudet P."/>
            <person name="Fey P."/>
            <person name="Pilcher K."/>
            <person name="Chen G."/>
            <person name="Saunders D."/>
            <person name="Sodergren E.J."/>
            <person name="Davis P."/>
            <person name="Kerhornou A."/>
            <person name="Nie X."/>
            <person name="Hall N."/>
            <person name="Anjard C."/>
            <person name="Hemphill L."/>
            <person name="Bason N."/>
            <person name="Farbrother P."/>
            <person name="Desany B."/>
            <person name="Just E."/>
            <person name="Morio T."/>
            <person name="Rost R."/>
            <person name="Churcher C.M."/>
            <person name="Cooper J."/>
            <person name="Haydock S."/>
            <person name="van Driessche N."/>
            <person name="Cronin A."/>
            <person name="Goodhead I."/>
            <person name="Muzny D.M."/>
            <person name="Mourier T."/>
            <person name="Pain A."/>
            <person name="Lu M."/>
            <person name="Harper D."/>
            <person name="Lindsay R."/>
            <person name="Hauser H."/>
            <person name="James K.D."/>
            <person name="Quiles M."/>
            <person name="Madan Babu M."/>
            <person name="Saito T."/>
            <person name="Buchrieser C."/>
            <person name="Wardroper A."/>
            <person name="Felder M."/>
            <person name="Thangavelu M."/>
            <person name="Johnson D."/>
            <person name="Knights A."/>
            <person name="Loulseged H."/>
            <person name="Mungall K.L."/>
            <person name="Oliver K."/>
            <person name="Price C."/>
            <person name="Quail M.A."/>
            <person name="Urushihara H."/>
            <person name="Hernandez J."/>
            <person name="Rabbinowitsch E."/>
            <person name="Steffen D."/>
            <person name="Sanders M."/>
            <person name="Ma J."/>
            <person name="Kohara Y."/>
            <person name="Sharp S."/>
            <person name="Simmonds M.N."/>
            <person name="Spiegler S."/>
            <person name="Tivey A."/>
            <person name="Sugano S."/>
            <person name="White B."/>
            <person name="Walker D."/>
            <person name="Woodward J.R."/>
            <person name="Winckler T."/>
            <person name="Tanaka Y."/>
            <person name="Shaulsky G."/>
            <person name="Schleicher M."/>
            <person name="Weinstock G.M."/>
            <person name="Rosenthal A."/>
            <person name="Cox E.C."/>
            <person name="Chisholm R.L."/>
            <person name="Gibbs R.A."/>
            <person name="Loomis W.F."/>
            <person name="Platzer M."/>
            <person name="Kay R.R."/>
            <person name="Williams J.G."/>
            <person name="Dear P.H."/>
            <person name="Noegel A.A."/>
            <person name="Barrell B.G."/>
            <person name="Kuspa A."/>
        </authorList>
    </citation>
    <scope>NUCLEOTIDE SEQUENCE [LARGE SCALE GENOMIC DNA]</scope>
    <source>
        <strain>AX4</strain>
    </source>
</reference>